<organism>
    <name type="scientific">Methanococcus maripaludis (strain C5 / ATCC BAA-1333)</name>
    <dbReference type="NCBI Taxonomy" id="402880"/>
    <lineage>
        <taxon>Archaea</taxon>
        <taxon>Methanobacteriati</taxon>
        <taxon>Methanobacteriota</taxon>
        <taxon>Methanomada group</taxon>
        <taxon>Methanococci</taxon>
        <taxon>Methanococcales</taxon>
        <taxon>Methanococcaceae</taxon>
        <taxon>Methanococcus</taxon>
    </lineage>
</organism>
<gene>
    <name type="ordered locus">MmarC5_0191</name>
</gene>
<dbReference type="EMBL" id="CP000609">
    <property type="protein sequence ID" value="ABO34507.1"/>
    <property type="molecule type" value="Genomic_DNA"/>
</dbReference>
<dbReference type="RefSeq" id="WP_011867965.1">
    <property type="nucleotide sequence ID" value="NC_009135.1"/>
</dbReference>
<dbReference type="SMR" id="A4FWD2"/>
<dbReference type="STRING" id="402880.MmarC5_0191"/>
<dbReference type="GeneID" id="4927906"/>
<dbReference type="KEGG" id="mmq:MmarC5_0191"/>
<dbReference type="eggNOG" id="arCOG01728">
    <property type="taxonomic scope" value="Archaea"/>
</dbReference>
<dbReference type="HOGENOM" id="CLU_038085_2_0_2"/>
<dbReference type="OrthoDB" id="372162at2157"/>
<dbReference type="Proteomes" id="UP000000253">
    <property type="component" value="Chromosome"/>
</dbReference>
<dbReference type="CDD" id="cd07361">
    <property type="entry name" value="MEMO_like"/>
    <property type="match status" value="1"/>
</dbReference>
<dbReference type="Gene3D" id="3.40.830.10">
    <property type="entry name" value="LigB-like"/>
    <property type="match status" value="1"/>
</dbReference>
<dbReference type="HAMAP" id="MF_00055">
    <property type="entry name" value="MEMO1"/>
    <property type="match status" value="1"/>
</dbReference>
<dbReference type="InterPro" id="IPR002737">
    <property type="entry name" value="MEMO1_fam"/>
</dbReference>
<dbReference type="NCBIfam" id="TIGR04336">
    <property type="entry name" value="AmmeMemoSam_B"/>
    <property type="match status" value="1"/>
</dbReference>
<dbReference type="NCBIfam" id="NF001987">
    <property type="entry name" value="PRK00782.1"/>
    <property type="match status" value="1"/>
</dbReference>
<dbReference type="PANTHER" id="PTHR11060">
    <property type="entry name" value="PROTEIN MEMO1"/>
    <property type="match status" value="1"/>
</dbReference>
<dbReference type="PANTHER" id="PTHR11060:SF0">
    <property type="entry name" value="PROTEIN MEMO1"/>
    <property type="match status" value="1"/>
</dbReference>
<dbReference type="Pfam" id="PF01875">
    <property type="entry name" value="Memo"/>
    <property type="match status" value="1"/>
</dbReference>
<evidence type="ECO:0000255" key="1">
    <source>
        <dbReference type="HAMAP-Rule" id="MF_00055"/>
    </source>
</evidence>
<proteinExistence type="inferred from homology"/>
<accession>A4FWD2</accession>
<feature type="chain" id="PRO_1000003320" description="MEMO1 family protein MmarC5_0191">
    <location>
        <begin position="1"/>
        <end position="284"/>
    </location>
</feature>
<comment type="similarity">
    <text evidence="1">Belongs to the MEMO1 family.</text>
</comment>
<name>Y191_METM5</name>
<sequence length="284" mass="31898">MKRNPVVAGMFYPAEYHELLEMIEYCYLSPRGPKELPSKRGNYTKPLGIVSPHAGYIYSGPVAAHGYKKISENINGEVTAIILGPNHTGLGSGISTMKGIWKTPFGDMEIDNEFADRLWKECDVLDLDENSHLREHSIEVQLPFLKHLEDLNIAKFKFVPICMMMQDYETSMDVGYFIAKVAKEMNRKIIIIASTDFSHYESQESASKKDALVIKDILELKDEEIFTDVVTHNISMCGYGPVIAMIKAMKDLGAKNSNLLYYSTSGDVTKDYSEVVGYASILVK</sequence>
<reference key="1">
    <citation type="submission" date="2007-03" db="EMBL/GenBank/DDBJ databases">
        <title>Complete sequence of chromosome of Methanococcus maripaludis C5.</title>
        <authorList>
            <consortium name="US DOE Joint Genome Institute"/>
            <person name="Copeland A."/>
            <person name="Lucas S."/>
            <person name="Lapidus A."/>
            <person name="Barry K."/>
            <person name="Glavina del Rio T."/>
            <person name="Dalin E."/>
            <person name="Tice H."/>
            <person name="Pitluck S."/>
            <person name="Chertkov O."/>
            <person name="Brettin T."/>
            <person name="Bruce D."/>
            <person name="Han C."/>
            <person name="Detter J.C."/>
            <person name="Schmutz J."/>
            <person name="Larimer F."/>
            <person name="Land M."/>
            <person name="Hauser L."/>
            <person name="Kyrpides N."/>
            <person name="Mikhailova N."/>
            <person name="Sieprawska-Lupa M."/>
            <person name="Whitman W.B."/>
            <person name="Richardson P."/>
        </authorList>
    </citation>
    <scope>NUCLEOTIDE SEQUENCE [LARGE SCALE GENOMIC DNA]</scope>
    <source>
        <strain>C5 / ATCC BAA-1333</strain>
    </source>
</reference>
<protein>
    <recommendedName>
        <fullName evidence="1">MEMO1 family protein MmarC5_0191</fullName>
    </recommendedName>
</protein>